<keyword id="KW-0030">Aminoacyl-tRNA synthetase</keyword>
<keyword id="KW-0067">ATP-binding</keyword>
<keyword id="KW-0963">Cytoplasm</keyword>
<keyword id="KW-0436">Ligase</keyword>
<keyword id="KW-0479">Metal-binding</keyword>
<keyword id="KW-0547">Nucleotide-binding</keyword>
<keyword id="KW-0648">Protein biosynthesis</keyword>
<keyword id="KW-0862">Zinc</keyword>
<sequence length="914" mass="104366">MSETQKENPYSSTVLLPKTDFPMKADLAKREPAQIQSWKSGQIFRKMKEQRKGKKEFVLHDGPPYANGNFHLGHSLNKIVKDIIIKSKSLAGFYADMIPGWDCHGLPIEVQVLKNLGKKARETGPEELRRLCRNYAEEFVGKQGEDLSRFLCFWEEDRIYKTMSPGFEAKIVEVFGELFQKGYVYRGKKPVYWSIDLATAHAEAEIEYYPHVSPSIYVKFPIVGEQKKFCLIWTTTPWTLPANLGICFNRKIEYSFFKTESGEELILADGLAESVTSTTGVSLNKVKSISSDELSVLKFQHPFMDRISISLFGDHVTLDAGTGCVHTAPGHGQDDYKVGLAAGLEPFSPVDDYGKYTDEFPLMQGKKVFDANPEIIQLLKDKGLLLHHSEFEHSYPHSWRSKKPLIFRATPQWFFKMDFNELREKSLSAIDGVQWIPSWGITRIRSMVETRPDWCLSRQRNWGVPIPAFTCESCGQTHIDDVSIQFFTKMVREKGIEIWYSEKAADLLPPGTKCGKCGSDSFKKGNDILDVWFDSGVSSFAVLGERKDEPPADLYFEGSDQHRGWFQSSLWPSMALRGIPPYKTVLTHGYVLDEKGHPMSKSLGNGIDPTADVIQIYGADILRLWVSSLDFRDDIKVGKESLKIVSEQYRKIRNTFRYLLGNLDGHTSEQNLPFEELEELDLFYLSKLSQFAEDVIANYEAYQFHQIYQKLILFCTVTLSQDYFDMIRDRMYCDARNSKTRKSSATALQYILETLCILTAPILSFTAEEVWVSNGKKDSVFLQNFPDLKFWKNQNLEEKFESVLQVREVVQKALEIARQENKLGKSLEAGLEIVSKNGTNLTKILPKETLEILFVVSQVHEKNPGLDVLSFYENEKFSVKVLKPVQVECPRCWRHTEDISKEGDLCGRCKSVVG</sequence>
<protein>
    <recommendedName>
        <fullName evidence="1">Isoleucine--tRNA ligase</fullName>
        <ecNumber evidence="1">6.1.1.5</ecNumber>
    </recommendedName>
    <alternativeName>
        <fullName evidence="1">Isoleucyl-tRNA synthetase</fullName>
        <shortName evidence="1">IleRS</shortName>
    </alternativeName>
</protein>
<gene>
    <name evidence="1" type="primary">ileS</name>
    <name type="ordered locus">LIC_12400</name>
</gene>
<organism>
    <name type="scientific">Leptospira interrogans serogroup Icterohaemorrhagiae serovar copenhageni (strain Fiocruz L1-130)</name>
    <dbReference type="NCBI Taxonomy" id="267671"/>
    <lineage>
        <taxon>Bacteria</taxon>
        <taxon>Pseudomonadati</taxon>
        <taxon>Spirochaetota</taxon>
        <taxon>Spirochaetia</taxon>
        <taxon>Leptospirales</taxon>
        <taxon>Leptospiraceae</taxon>
        <taxon>Leptospira</taxon>
    </lineage>
</organism>
<proteinExistence type="inferred from homology"/>
<feature type="chain" id="PRO_0000098409" description="Isoleucine--tRNA ligase">
    <location>
        <begin position="1"/>
        <end position="914"/>
    </location>
</feature>
<feature type="short sequence motif" description="'HIGH' region">
    <location>
        <begin position="64"/>
        <end position="74"/>
    </location>
</feature>
<feature type="short sequence motif" description="'KMSKS' region">
    <location>
        <begin position="598"/>
        <end position="602"/>
    </location>
</feature>
<feature type="binding site" evidence="1">
    <location>
        <position position="557"/>
    </location>
    <ligand>
        <name>L-isoleucyl-5'-AMP</name>
        <dbReference type="ChEBI" id="CHEBI:178002"/>
    </ligand>
</feature>
<feature type="binding site" evidence="1">
    <location>
        <position position="601"/>
    </location>
    <ligand>
        <name>ATP</name>
        <dbReference type="ChEBI" id="CHEBI:30616"/>
    </ligand>
</feature>
<feature type="binding site" evidence="1">
    <location>
        <position position="889"/>
    </location>
    <ligand>
        <name>Zn(2+)</name>
        <dbReference type="ChEBI" id="CHEBI:29105"/>
    </ligand>
</feature>
<feature type="binding site" evidence="1">
    <location>
        <position position="892"/>
    </location>
    <ligand>
        <name>Zn(2+)</name>
        <dbReference type="ChEBI" id="CHEBI:29105"/>
    </ligand>
</feature>
<feature type="binding site" evidence="1">
    <location>
        <position position="906"/>
    </location>
    <ligand>
        <name>Zn(2+)</name>
        <dbReference type="ChEBI" id="CHEBI:29105"/>
    </ligand>
</feature>
<feature type="binding site" evidence="1">
    <location>
        <position position="909"/>
    </location>
    <ligand>
        <name>Zn(2+)</name>
        <dbReference type="ChEBI" id="CHEBI:29105"/>
    </ligand>
</feature>
<reference key="1">
    <citation type="journal article" date="2004" name="J. Bacteriol.">
        <title>Comparative genomics of two Leptospira interrogans serovars reveals novel insights into physiology and pathogenesis.</title>
        <authorList>
            <person name="Nascimento A.L.T.O."/>
            <person name="Ko A.I."/>
            <person name="Martins E.A.L."/>
            <person name="Monteiro-Vitorello C.B."/>
            <person name="Ho P.L."/>
            <person name="Haake D.A."/>
            <person name="Verjovski-Almeida S."/>
            <person name="Hartskeerl R.A."/>
            <person name="Marques M.V."/>
            <person name="Oliveira M.C."/>
            <person name="Menck C.F.M."/>
            <person name="Leite L.C.C."/>
            <person name="Carrer H."/>
            <person name="Coutinho L.L."/>
            <person name="Degrave W.M."/>
            <person name="Dellagostin O.A."/>
            <person name="El-Dorry H."/>
            <person name="Ferro E.S."/>
            <person name="Ferro M.I.T."/>
            <person name="Furlan L.R."/>
            <person name="Gamberini M."/>
            <person name="Giglioti E.A."/>
            <person name="Goes-Neto A."/>
            <person name="Goldman G.H."/>
            <person name="Goldman M.H.S."/>
            <person name="Harakava R."/>
            <person name="Jeronimo S.M.B."/>
            <person name="Junqueira-de-Azevedo I.L.M."/>
            <person name="Kimura E.T."/>
            <person name="Kuramae E.E."/>
            <person name="Lemos E.G.M."/>
            <person name="Lemos M.V.F."/>
            <person name="Marino C.L."/>
            <person name="Nunes L.R."/>
            <person name="de Oliveira R.C."/>
            <person name="Pereira G.G."/>
            <person name="Reis M.S."/>
            <person name="Schriefer A."/>
            <person name="Siqueira W.J."/>
            <person name="Sommer P."/>
            <person name="Tsai S.M."/>
            <person name="Simpson A.J.G."/>
            <person name="Ferro J.A."/>
            <person name="Camargo L.E.A."/>
            <person name="Kitajima J.P."/>
            <person name="Setubal J.C."/>
            <person name="Van Sluys M.A."/>
        </authorList>
    </citation>
    <scope>NUCLEOTIDE SEQUENCE [LARGE SCALE GENOMIC DNA]</scope>
    <source>
        <strain>Fiocruz L1-130</strain>
    </source>
</reference>
<comment type="function">
    <text evidence="1">Catalyzes the attachment of isoleucine to tRNA(Ile). As IleRS can inadvertently accommodate and process structurally similar amino acids such as valine, to avoid such errors it has two additional distinct tRNA(Ile)-dependent editing activities. One activity is designated as 'pretransfer' editing and involves the hydrolysis of activated Val-AMP. The other activity is designated 'posttransfer' editing and involves deacylation of mischarged Val-tRNA(Ile).</text>
</comment>
<comment type="catalytic activity">
    <reaction evidence="1">
        <text>tRNA(Ile) + L-isoleucine + ATP = L-isoleucyl-tRNA(Ile) + AMP + diphosphate</text>
        <dbReference type="Rhea" id="RHEA:11060"/>
        <dbReference type="Rhea" id="RHEA-COMP:9666"/>
        <dbReference type="Rhea" id="RHEA-COMP:9695"/>
        <dbReference type="ChEBI" id="CHEBI:30616"/>
        <dbReference type="ChEBI" id="CHEBI:33019"/>
        <dbReference type="ChEBI" id="CHEBI:58045"/>
        <dbReference type="ChEBI" id="CHEBI:78442"/>
        <dbReference type="ChEBI" id="CHEBI:78528"/>
        <dbReference type="ChEBI" id="CHEBI:456215"/>
        <dbReference type="EC" id="6.1.1.5"/>
    </reaction>
</comment>
<comment type="cofactor">
    <cofactor evidence="1">
        <name>Zn(2+)</name>
        <dbReference type="ChEBI" id="CHEBI:29105"/>
    </cofactor>
    <text evidence="1">Binds 1 zinc ion per subunit.</text>
</comment>
<comment type="subunit">
    <text evidence="1">Monomer.</text>
</comment>
<comment type="subcellular location">
    <subcellularLocation>
        <location evidence="1">Cytoplasm</location>
    </subcellularLocation>
</comment>
<comment type="domain">
    <text evidence="1">IleRS has two distinct active sites: one for aminoacylation and one for editing. The misactivated valine is translocated from the active site to the editing site, which sterically excludes the correctly activated isoleucine. The single editing site contains two valyl binding pockets, one specific for each substrate (Val-AMP or Val-tRNA(Ile)).</text>
</comment>
<comment type="similarity">
    <text evidence="1">Belongs to the class-I aminoacyl-tRNA synthetase family. IleS type 1 subfamily.</text>
</comment>
<name>SYI_LEPIC</name>
<accession>Q72PR7</accession>
<evidence type="ECO:0000255" key="1">
    <source>
        <dbReference type="HAMAP-Rule" id="MF_02002"/>
    </source>
</evidence>
<dbReference type="EC" id="6.1.1.5" evidence="1"/>
<dbReference type="EMBL" id="AE016823">
    <property type="protein sequence ID" value="AAS70969.1"/>
    <property type="molecule type" value="Genomic_DNA"/>
</dbReference>
<dbReference type="RefSeq" id="WP_000005312.1">
    <property type="nucleotide sequence ID" value="NC_005823.1"/>
</dbReference>
<dbReference type="SMR" id="Q72PR7"/>
<dbReference type="GeneID" id="61142280"/>
<dbReference type="KEGG" id="lic:LIC_12400"/>
<dbReference type="HOGENOM" id="CLU_001493_7_1_12"/>
<dbReference type="Proteomes" id="UP000007037">
    <property type="component" value="Chromosome I"/>
</dbReference>
<dbReference type="GO" id="GO:0005829">
    <property type="term" value="C:cytosol"/>
    <property type="evidence" value="ECO:0007669"/>
    <property type="project" value="TreeGrafter"/>
</dbReference>
<dbReference type="GO" id="GO:0002161">
    <property type="term" value="F:aminoacyl-tRNA deacylase activity"/>
    <property type="evidence" value="ECO:0007669"/>
    <property type="project" value="InterPro"/>
</dbReference>
<dbReference type="GO" id="GO:0005524">
    <property type="term" value="F:ATP binding"/>
    <property type="evidence" value="ECO:0007669"/>
    <property type="project" value="UniProtKB-UniRule"/>
</dbReference>
<dbReference type="GO" id="GO:0004822">
    <property type="term" value="F:isoleucine-tRNA ligase activity"/>
    <property type="evidence" value="ECO:0007669"/>
    <property type="project" value="UniProtKB-UniRule"/>
</dbReference>
<dbReference type="GO" id="GO:0000049">
    <property type="term" value="F:tRNA binding"/>
    <property type="evidence" value="ECO:0007669"/>
    <property type="project" value="InterPro"/>
</dbReference>
<dbReference type="GO" id="GO:0008270">
    <property type="term" value="F:zinc ion binding"/>
    <property type="evidence" value="ECO:0007669"/>
    <property type="project" value="UniProtKB-UniRule"/>
</dbReference>
<dbReference type="GO" id="GO:0006428">
    <property type="term" value="P:isoleucyl-tRNA aminoacylation"/>
    <property type="evidence" value="ECO:0007669"/>
    <property type="project" value="UniProtKB-UniRule"/>
</dbReference>
<dbReference type="CDD" id="cd07960">
    <property type="entry name" value="Anticodon_Ia_Ile_BEm"/>
    <property type="match status" value="1"/>
</dbReference>
<dbReference type="CDD" id="cd00818">
    <property type="entry name" value="IleRS_core"/>
    <property type="match status" value="1"/>
</dbReference>
<dbReference type="FunFam" id="1.10.730.20:FF:000006">
    <property type="entry name" value="Isoleucine--tRNA ligase"/>
    <property type="match status" value="1"/>
</dbReference>
<dbReference type="Gene3D" id="1.10.730.20">
    <property type="match status" value="1"/>
</dbReference>
<dbReference type="Gene3D" id="3.40.50.620">
    <property type="entry name" value="HUPs"/>
    <property type="match status" value="2"/>
</dbReference>
<dbReference type="Gene3D" id="1.10.10.830">
    <property type="entry name" value="Ile-tRNA synthetase CP2 domain-like"/>
    <property type="match status" value="1"/>
</dbReference>
<dbReference type="HAMAP" id="MF_02002">
    <property type="entry name" value="Ile_tRNA_synth_type1"/>
    <property type="match status" value="1"/>
</dbReference>
<dbReference type="InterPro" id="IPR001412">
    <property type="entry name" value="aa-tRNA-synth_I_CS"/>
</dbReference>
<dbReference type="InterPro" id="IPR002300">
    <property type="entry name" value="aa-tRNA-synth_Ia"/>
</dbReference>
<dbReference type="InterPro" id="IPR033708">
    <property type="entry name" value="Anticodon_Ile_BEm"/>
</dbReference>
<dbReference type="InterPro" id="IPR002301">
    <property type="entry name" value="Ile-tRNA-ligase"/>
</dbReference>
<dbReference type="InterPro" id="IPR023585">
    <property type="entry name" value="Ile-tRNA-ligase_type1"/>
</dbReference>
<dbReference type="InterPro" id="IPR050081">
    <property type="entry name" value="Ile-tRNA_ligase"/>
</dbReference>
<dbReference type="InterPro" id="IPR013155">
    <property type="entry name" value="M/V/L/I-tRNA-synth_anticd-bd"/>
</dbReference>
<dbReference type="InterPro" id="IPR014729">
    <property type="entry name" value="Rossmann-like_a/b/a_fold"/>
</dbReference>
<dbReference type="InterPro" id="IPR009080">
    <property type="entry name" value="tRNAsynth_Ia_anticodon-bd"/>
</dbReference>
<dbReference type="InterPro" id="IPR009008">
    <property type="entry name" value="Val/Leu/Ile-tRNA-synth_edit"/>
</dbReference>
<dbReference type="InterPro" id="IPR010663">
    <property type="entry name" value="Znf_FPG/IleRS"/>
</dbReference>
<dbReference type="NCBIfam" id="TIGR00392">
    <property type="entry name" value="ileS"/>
    <property type="match status" value="1"/>
</dbReference>
<dbReference type="PANTHER" id="PTHR42765:SF1">
    <property type="entry name" value="ISOLEUCINE--TRNA LIGASE, MITOCHONDRIAL"/>
    <property type="match status" value="1"/>
</dbReference>
<dbReference type="PANTHER" id="PTHR42765">
    <property type="entry name" value="SOLEUCYL-TRNA SYNTHETASE"/>
    <property type="match status" value="1"/>
</dbReference>
<dbReference type="Pfam" id="PF08264">
    <property type="entry name" value="Anticodon_1"/>
    <property type="match status" value="1"/>
</dbReference>
<dbReference type="Pfam" id="PF00133">
    <property type="entry name" value="tRNA-synt_1"/>
    <property type="match status" value="1"/>
</dbReference>
<dbReference type="Pfam" id="PF06827">
    <property type="entry name" value="zf-FPG_IleRS"/>
    <property type="match status" value="1"/>
</dbReference>
<dbReference type="PRINTS" id="PR00984">
    <property type="entry name" value="TRNASYNTHILE"/>
</dbReference>
<dbReference type="SUPFAM" id="SSF47323">
    <property type="entry name" value="Anticodon-binding domain of a subclass of class I aminoacyl-tRNA synthetases"/>
    <property type="match status" value="1"/>
</dbReference>
<dbReference type="SUPFAM" id="SSF52374">
    <property type="entry name" value="Nucleotidylyl transferase"/>
    <property type="match status" value="1"/>
</dbReference>
<dbReference type="SUPFAM" id="SSF50677">
    <property type="entry name" value="ValRS/IleRS/LeuRS editing domain"/>
    <property type="match status" value="1"/>
</dbReference>
<dbReference type="PROSITE" id="PS00178">
    <property type="entry name" value="AA_TRNA_LIGASE_I"/>
    <property type="match status" value="1"/>
</dbReference>